<evidence type="ECO:0000255" key="1">
    <source>
        <dbReference type="HAMAP-Rule" id="MF_01192"/>
    </source>
</evidence>
<evidence type="ECO:0000305" key="2"/>
<name>XNI_SHISS</name>
<keyword id="KW-0238">DNA-binding</keyword>
<keyword id="KW-0255">Endonuclease</keyword>
<keyword id="KW-0378">Hydrolase</keyword>
<keyword id="KW-0460">Magnesium</keyword>
<keyword id="KW-0479">Metal-binding</keyword>
<keyword id="KW-0540">Nuclease</keyword>
<keyword id="KW-0630">Potassium</keyword>
<keyword id="KW-1185">Reference proteome</keyword>
<feature type="chain" id="PRO_0000297886" description="Flap endonuclease Xni">
    <location>
        <begin position="1"/>
        <end position="251"/>
    </location>
</feature>
<feature type="domain" description="5'-3' exonuclease" evidence="1">
    <location>
        <begin position="160"/>
        <end position="249"/>
    </location>
</feature>
<feature type="region of interest" description="Interaction with DNA" evidence="1">
    <location>
        <begin position="184"/>
        <end position="189"/>
    </location>
</feature>
<feature type="binding site" evidence="1">
    <location>
        <position position="104"/>
    </location>
    <ligand>
        <name>Mg(2+)</name>
        <dbReference type="ChEBI" id="CHEBI:18420"/>
    </ligand>
</feature>
<feature type="binding site" evidence="1">
    <location>
        <position position="171"/>
    </location>
    <ligand>
        <name>K(+)</name>
        <dbReference type="ChEBI" id="CHEBI:29103"/>
    </ligand>
</feature>
<feature type="binding site" evidence="1">
    <location>
        <position position="172"/>
    </location>
    <ligand>
        <name>K(+)</name>
        <dbReference type="ChEBI" id="CHEBI:29103"/>
    </ligand>
</feature>
<feature type="binding site" evidence="1">
    <location>
        <position position="180"/>
    </location>
    <ligand>
        <name>K(+)</name>
        <dbReference type="ChEBI" id="CHEBI:29103"/>
    </ligand>
</feature>
<feature type="binding site" evidence="1">
    <location>
        <position position="182"/>
    </location>
    <ligand>
        <name>K(+)</name>
        <dbReference type="ChEBI" id="CHEBI:29103"/>
    </ligand>
</feature>
<feature type="binding site" evidence="1">
    <location>
        <position position="185"/>
    </location>
    <ligand>
        <name>K(+)</name>
        <dbReference type="ChEBI" id="CHEBI:29103"/>
    </ligand>
</feature>
<dbReference type="EC" id="3.1.-.-" evidence="1"/>
<dbReference type="EMBL" id="CP000038">
    <property type="protein sequence ID" value="AAZ89554.1"/>
    <property type="status" value="ALT_INIT"/>
    <property type="molecule type" value="Genomic_DNA"/>
</dbReference>
<dbReference type="RefSeq" id="WP_000268232.1">
    <property type="nucleotide sequence ID" value="NC_007384.1"/>
</dbReference>
<dbReference type="SMR" id="Q3YY58"/>
<dbReference type="GeneID" id="93779200"/>
<dbReference type="KEGG" id="ssn:SSON_2955"/>
<dbReference type="HOGENOM" id="CLU_004675_1_2_6"/>
<dbReference type="Proteomes" id="UP000002529">
    <property type="component" value="Chromosome"/>
</dbReference>
<dbReference type="GO" id="GO:0008409">
    <property type="term" value="F:5'-3' exonuclease activity"/>
    <property type="evidence" value="ECO:0007669"/>
    <property type="project" value="InterPro"/>
</dbReference>
<dbReference type="GO" id="GO:0017108">
    <property type="term" value="F:5'-flap endonuclease activity"/>
    <property type="evidence" value="ECO:0007669"/>
    <property type="project" value="UniProtKB-UniRule"/>
</dbReference>
<dbReference type="GO" id="GO:0003677">
    <property type="term" value="F:DNA binding"/>
    <property type="evidence" value="ECO:0007669"/>
    <property type="project" value="UniProtKB-UniRule"/>
</dbReference>
<dbReference type="GO" id="GO:0000287">
    <property type="term" value="F:magnesium ion binding"/>
    <property type="evidence" value="ECO:0007669"/>
    <property type="project" value="UniProtKB-UniRule"/>
</dbReference>
<dbReference type="GO" id="GO:0030955">
    <property type="term" value="F:potassium ion binding"/>
    <property type="evidence" value="ECO:0007669"/>
    <property type="project" value="UniProtKB-UniRule"/>
</dbReference>
<dbReference type="GO" id="GO:0033567">
    <property type="term" value="P:DNA replication, Okazaki fragment processing"/>
    <property type="evidence" value="ECO:0007669"/>
    <property type="project" value="UniProtKB-UniRule"/>
</dbReference>
<dbReference type="CDD" id="cd09898">
    <property type="entry name" value="H3TH_53EXO"/>
    <property type="match status" value="1"/>
</dbReference>
<dbReference type="CDD" id="cd09859">
    <property type="entry name" value="PIN_53EXO"/>
    <property type="match status" value="1"/>
</dbReference>
<dbReference type="FunFam" id="1.10.150.20:FF:000003">
    <property type="entry name" value="DNA polymerase I"/>
    <property type="match status" value="1"/>
</dbReference>
<dbReference type="FunFam" id="3.40.50.1010:FF:000011">
    <property type="entry name" value="Flap endonuclease Xni"/>
    <property type="match status" value="1"/>
</dbReference>
<dbReference type="Gene3D" id="1.10.150.20">
    <property type="entry name" value="5' to 3' exonuclease, C-terminal subdomain"/>
    <property type="match status" value="1"/>
</dbReference>
<dbReference type="Gene3D" id="3.40.50.1010">
    <property type="entry name" value="5'-nuclease"/>
    <property type="match status" value="1"/>
</dbReference>
<dbReference type="HAMAP" id="MF_01192">
    <property type="entry name" value="Xni"/>
    <property type="match status" value="1"/>
</dbReference>
<dbReference type="InterPro" id="IPR020046">
    <property type="entry name" value="5-3_exonucl_a-hlix_arch_N"/>
</dbReference>
<dbReference type="InterPro" id="IPR002421">
    <property type="entry name" value="5-3_exonuclease"/>
</dbReference>
<dbReference type="InterPro" id="IPR036279">
    <property type="entry name" value="5-3_exonuclease_C_sf"/>
</dbReference>
<dbReference type="InterPro" id="IPR020045">
    <property type="entry name" value="DNA_polI_H3TH"/>
</dbReference>
<dbReference type="InterPro" id="IPR038969">
    <property type="entry name" value="FEN"/>
</dbReference>
<dbReference type="InterPro" id="IPR008918">
    <property type="entry name" value="HhH2"/>
</dbReference>
<dbReference type="InterPro" id="IPR029060">
    <property type="entry name" value="PIN-like_dom_sf"/>
</dbReference>
<dbReference type="InterPro" id="IPR022895">
    <property type="entry name" value="Xni"/>
</dbReference>
<dbReference type="NCBIfam" id="NF007017">
    <property type="entry name" value="PRK09482.1"/>
    <property type="match status" value="1"/>
</dbReference>
<dbReference type="PANTHER" id="PTHR42646:SF2">
    <property type="entry name" value="5'-3' EXONUCLEASE FAMILY PROTEIN"/>
    <property type="match status" value="1"/>
</dbReference>
<dbReference type="PANTHER" id="PTHR42646">
    <property type="entry name" value="FLAP ENDONUCLEASE XNI"/>
    <property type="match status" value="1"/>
</dbReference>
<dbReference type="Pfam" id="PF01367">
    <property type="entry name" value="5_3_exonuc"/>
    <property type="match status" value="1"/>
</dbReference>
<dbReference type="Pfam" id="PF02739">
    <property type="entry name" value="5_3_exonuc_N"/>
    <property type="match status" value="1"/>
</dbReference>
<dbReference type="SMART" id="SM00475">
    <property type="entry name" value="53EXOc"/>
    <property type="match status" value="1"/>
</dbReference>
<dbReference type="SMART" id="SM00279">
    <property type="entry name" value="HhH2"/>
    <property type="match status" value="1"/>
</dbReference>
<dbReference type="SUPFAM" id="SSF47807">
    <property type="entry name" value="5' to 3' exonuclease, C-terminal subdomain"/>
    <property type="match status" value="1"/>
</dbReference>
<dbReference type="SUPFAM" id="SSF88723">
    <property type="entry name" value="PIN domain-like"/>
    <property type="match status" value="1"/>
</dbReference>
<gene>
    <name evidence="1" type="primary">xni</name>
    <name evidence="1" type="synonym">ygdG</name>
    <name type="ordered locus">SSON_2955</name>
</gene>
<protein>
    <recommendedName>
        <fullName evidence="1">Flap endonuclease Xni</fullName>
        <shortName evidence="1">FEN</shortName>
        <ecNumber evidence="1">3.1.-.-</ecNumber>
    </recommendedName>
</protein>
<organism>
    <name type="scientific">Shigella sonnei (strain Ss046)</name>
    <dbReference type="NCBI Taxonomy" id="300269"/>
    <lineage>
        <taxon>Bacteria</taxon>
        <taxon>Pseudomonadati</taxon>
        <taxon>Pseudomonadota</taxon>
        <taxon>Gammaproteobacteria</taxon>
        <taxon>Enterobacterales</taxon>
        <taxon>Enterobacteriaceae</taxon>
        <taxon>Shigella</taxon>
    </lineage>
</organism>
<accession>Q3YY58</accession>
<proteinExistence type="inferred from homology"/>
<sequence length="251" mass="28166">MAVHLLIVDALNLIRRIHAVQGSPCVETCQHALDQLIMHSQPTHAVAVFDDENRSSGWRHQRLPDYKAGRPPMPEELHDEMPALRAAFEQRGVPCWSTSGNEADDLAATLAVKVTQAGHQATIVSTDKGYCQLLSPTLRIRDYFQKRWLDAPFIDKEFGVQPQQLPDYWGLAGISSSKVPGVAGIGPKSATQLLVEFQSLEGIYENLDAVAEKWRKKLETHKEMAFLCRDIARLQTDLHIDGNLQQLRLVR</sequence>
<reference key="1">
    <citation type="journal article" date="2005" name="Nucleic Acids Res.">
        <title>Genome dynamics and diversity of Shigella species, the etiologic agents of bacillary dysentery.</title>
        <authorList>
            <person name="Yang F."/>
            <person name="Yang J."/>
            <person name="Zhang X."/>
            <person name="Chen L."/>
            <person name="Jiang Y."/>
            <person name="Yan Y."/>
            <person name="Tang X."/>
            <person name="Wang J."/>
            <person name="Xiong Z."/>
            <person name="Dong J."/>
            <person name="Xue Y."/>
            <person name="Zhu Y."/>
            <person name="Xu X."/>
            <person name="Sun L."/>
            <person name="Chen S."/>
            <person name="Nie H."/>
            <person name="Peng J."/>
            <person name="Xu J."/>
            <person name="Wang Y."/>
            <person name="Yuan Z."/>
            <person name="Wen Y."/>
            <person name="Yao Z."/>
            <person name="Shen Y."/>
            <person name="Qiang B."/>
            <person name="Hou Y."/>
            <person name="Yu J."/>
            <person name="Jin Q."/>
        </authorList>
    </citation>
    <scope>NUCLEOTIDE SEQUENCE [LARGE SCALE GENOMIC DNA]</scope>
    <source>
        <strain>Ss046</strain>
    </source>
</reference>
<comment type="function">
    <text evidence="1">Has flap endonuclease activity. During DNA replication, flap endonucleases cleave the 5'-overhanging flap structure that is generated by displacement synthesis when DNA polymerase encounters the 5'-end of a downstream Okazaki fragment.</text>
</comment>
<comment type="cofactor">
    <cofactor evidence="1">
        <name>Mg(2+)</name>
        <dbReference type="ChEBI" id="CHEBI:18420"/>
    </cofactor>
    <text evidence="1">Binds 2 Mg(2+) per subunit. Only one magnesium ion has a direct interaction with the protein, the other interactions are indirect.</text>
</comment>
<comment type="cofactor">
    <cofactor evidence="1">
        <name>K(+)</name>
        <dbReference type="ChEBI" id="CHEBI:29103"/>
    </cofactor>
    <text evidence="1">Binds 1 K(+) per subunit. The potassium ion strongly increases the affinity for DNA.</text>
</comment>
<comment type="similarity">
    <text evidence="1">Belongs to the Xni family.</text>
</comment>
<comment type="sequence caution" evidence="2">
    <conflict type="erroneous initiation">
        <sequence resource="EMBL-CDS" id="AAZ89554"/>
    </conflict>
    <text>Extended N-terminus.</text>
</comment>